<keyword id="KW-0963">Cytoplasm</keyword>
<keyword id="KW-0255">Endonuclease</keyword>
<keyword id="KW-0378">Hydrolase</keyword>
<keyword id="KW-0460">Magnesium</keyword>
<keyword id="KW-0479">Metal-binding</keyword>
<keyword id="KW-0507">mRNA processing</keyword>
<keyword id="KW-0540">Nuclease</keyword>
<keyword id="KW-1185">Reference proteome</keyword>
<keyword id="KW-0694">RNA-binding</keyword>
<keyword id="KW-0698">rRNA processing</keyword>
<keyword id="KW-0699">rRNA-binding</keyword>
<keyword id="KW-0819">tRNA processing</keyword>
<protein>
    <recommendedName>
        <fullName evidence="1">Ribonuclease 3</fullName>
        <ecNumber evidence="1">3.1.26.3</ecNumber>
    </recommendedName>
    <alternativeName>
        <fullName evidence="1">Ribonuclease III</fullName>
        <shortName evidence="1">RNase III</shortName>
    </alternativeName>
</protein>
<comment type="function">
    <text evidence="1">Digests double-stranded RNA. Involved in the processing of primary rRNA transcript to yield the immediate precursors to the large and small rRNAs (23S and 16S). Processes some mRNAs, and tRNAs when they are encoded in the rRNA operon. Processes pre-crRNA and tracrRNA of type II CRISPR loci if present in the organism.</text>
</comment>
<comment type="catalytic activity">
    <reaction evidence="1">
        <text>Endonucleolytic cleavage to 5'-phosphomonoester.</text>
        <dbReference type="EC" id="3.1.26.3"/>
    </reaction>
</comment>
<comment type="cofactor">
    <cofactor evidence="1">
        <name>Mg(2+)</name>
        <dbReference type="ChEBI" id="CHEBI:18420"/>
    </cofactor>
</comment>
<comment type="subunit">
    <text evidence="1">Homodimer.</text>
</comment>
<comment type="subcellular location">
    <subcellularLocation>
        <location evidence="1">Cytoplasm</location>
    </subcellularLocation>
</comment>
<comment type="similarity">
    <text evidence="1">Belongs to the ribonuclease III family.</text>
</comment>
<comment type="sequence caution" evidence="2">
    <conflict type="erroneous initiation">
        <sequence resource="EMBL-CDS" id="AAD19719"/>
    </conflict>
    <text>Truncated N-terminus.</text>
</comment>
<gene>
    <name evidence="1" type="primary">rnc</name>
    <name type="ordered locus">ZMO1375</name>
</gene>
<sequence>MADKRFFGTKTFPNQEKALKAKIMNNDAFISWIEKNLGHRPKDPALFLRAMTHPSHGNSDYQRLEFLGDRVLGLVIANWLYDLFPREPEGKLSRRLNSLVSGASCASIARIVGLPQWLRLGKQARDDGAAASDNVLGDVMEAMIGAIFLESGIEAAGKLIHKYWAPLVTGQESAPKHPKSALQEWAAAHNRRPPVYEIVSRTGPQHNPCFTIQVSIAGVGEASAEGSSKQEAQTAAAQALLDILAQ</sequence>
<proteinExistence type="inferred from homology"/>
<evidence type="ECO:0000255" key="1">
    <source>
        <dbReference type="HAMAP-Rule" id="MF_00104"/>
    </source>
</evidence>
<evidence type="ECO:0000305" key="2"/>
<feature type="chain" id="PRO_0000180463" description="Ribonuclease 3">
    <location>
        <begin position="1"/>
        <end position="246"/>
    </location>
</feature>
<feature type="domain" description="RNase III" evidence="1">
    <location>
        <begin position="30"/>
        <end position="152"/>
    </location>
</feature>
<feature type="domain" description="DRBM" evidence="1">
    <location>
        <begin position="177"/>
        <end position="246"/>
    </location>
</feature>
<feature type="active site" evidence="1">
    <location>
        <position position="69"/>
    </location>
</feature>
<feature type="active site" evidence="1">
    <location>
        <position position="141"/>
    </location>
</feature>
<feature type="binding site" evidence="1">
    <location>
        <position position="65"/>
    </location>
    <ligand>
        <name>Mg(2+)</name>
        <dbReference type="ChEBI" id="CHEBI:18420"/>
    </ligand>
</feature>
<feature type="binding site" evidence="1">
    <location>
        <position position="138"/>
    </location>
    <ligand>
        <name>Mg(2+)</name>
        <dbReference type="ChEBI" id="CHEBI:18420"/>
    </ligand>
</feature>
<feature type="binding site" evidence="1">
    <location>
        <position position="141"/>
    </location>
    <ligand>
        <name>Mg(2+)</name>
        <dbReference type="ChEBI" id="CHEBI:18420"/>
    </ligand>
</feature>
<feature type="sequence conflict" description="In Ref. 1; AAD19719." evidence="2" ref="1">
    <original>NLGHRP</original>
    <variation>FRPSA</variation>
    <location>
        <begin position="36"/>
        <end position="41"/>
    </location>
</feature>
<organism>
    <name type="scientific">Zymomonas mobilis subsp. mobilis (strain ATCC 31821 / ZM4 / CP4)</name>
    <dbReference type="NCBI Taxonomy" id="264203"/>
    <lineage>
        <taxon>Bacteria</taxon>
        <taxon>Pseudomonadati</taxon>
        <taxon>Pseudomonadota</taxon>
        <taxon>Alphaproteobacteria</taxon>
        <taxon>Sphingomonadales</taxon>
        <taxon>Zymomonadaceae</taxon>
        <taxon>Zymomonas</taxon>
    </lineage>
</organism>
<accession>Q9Z5U2</accession>
<accession>Q5NMR1</accession>
<name>RNC_ZYMMO</name>
<dbReference type="EC" id="3.1.26.3" evidence="1"/>
<dbReference type="EMBL" id="AF124349">
    <property type="protein sequence ID" value="AAD19719.1"/>
    <property type="status" value="ALT_INIT"/>
    <property type="molecule type" value="Genomic_DNA"/>
</dbReference>
<dbReference type="EMBL" id="AE008692">
    <property type="protein sequence ID" value="AAV89999.2"/>
    <property type="molecule type" value="Genomic_DNA"/>
</dbReference>
<dbReference type="RefSeq" id="WP_011241161.1">
    <property type="nucleotide sequence ID" value="NZ_CP035711.1"/>
</dbReference>
<dbReference type="SMR" id="Q9Z5U2"/>
<dbReference type="STRING" id="264203.ZMO1375"/>
<dbReference type="GeneID" id="79905258"/>
<dbReference type="KEGG" id="zmo:ZMO1375"/>
<dbReference type="eggNOG" id="COG0571">
    <property type="taxonomic scope" value="Bacteria"/>
</dbReference>
<dbReference type="HOGENOM" id="CLU_000907_1_1_5"/>
<dbReference type="Proteomes" id="UP000001173">
    <property type="component" value="Chromosome"/>
</dbReference>
<dbReference type="GO" id="GO:0005737">
    <property type="term" value="C:cytoplasm"/>
    <property type="evidence" value="ECO:0007669"/>
    <property type="project" value="UniProtKB-SubCell"/>
</dbReference>
<dbReference type="GO" id="GO:0003725">
    <property type="term" value="F:double-stranded RNA binding"/>
    <property type="evidence" value="ECO:0007669"/>
    <property type="project" value="TreeGrafter"/>
</dbReference>
<dbReference type="GO" id="GO:0046872">
    <property type="term" value="F:metal ion binding"/>
    <property type="evidence" value="ECO:0007669"/>
    <property type="project" value="UniProtKB-KW"/>
</dbReference>
<dbReference type="GO" id="GO:0004525">
    <property type="term" value="F:ribonuclease III activity"/>
    <property type="evidence" value="ECO:0007669"/>
    <property type="project" value="UniProtKB-UniRule"/>
</dbReference>
<dbReference type="GO" id="GO:0019843">
    <property type="term" value="F:rRNA binding"/>
    <property type="evidence" value="ECO:0007669"/>
    <property type="project" value="UniProtKB-KW"/>
</dbReference>
<dbReference type="GO" id="GO:0006397">
    <property type="term" value="P:mRNA processing"/>
    <property type="evidence" value="ECO:0007669"/>
    <property type="project" value="UniProtKB-UniRule"/>
</dbReference>
<dbReference type="GO" id="GO:0010468">
    <property type="term" value="P:regulation of gene expression"/>
    <property type="evidence" value="ECO:0007669"/>
    <property type="project" value="TreeGrafter"/>
</dbReference>
<dbReference type="GO" id="GO:0006364">
    <property type="term" value="P:rRNA processing"/>
    <property type="evidence" value="ECO:0007669"/>
    <property type="project" value="UniProtKB-UniRule"/>
</dbReference>
<dbReference type="GO" id="GO:0008033">
    <property type="term" value="P:tRNA processing"/>
    <property type="evidence" value="ECO:0007669"/>
    <property type="project" value="UniProtKB-KW"/>
</dbReference>
<dbReference type="CDD" id="cd10845">
    <property type="entry name" value="DSRM_RNAse_III_family"/>
    <property type="match status" value="1"/>
</dbReference>
<dbReference type="CDD" id="cd00593">
    <property type="entry name" value="RIBOc"/>
    <property type="match status" value="1"/>
</dbReference>
<dbReference type="FunFam" id="1.10.1520.10:FF:000001">
    <property type="entry name" value="Ribonuclease 3"/>
    <property type="match status" value="1"/>
</dbReference>
<dbReference type="Gene3D" id="3.30.160.20">
    <property type="match status" value="1"/>
</dbReference>
<dbReference type="Gene3D" id="1.10.1520.10">
    <property type="entry name" value="Ribonuclease III domain"/>
    <property type="match status" value="1"/>
</dbReference>
<dbReference type="HAMAP" id="MF_00104">
    <property type="entry name" value="RNase_III"/>
    <property type="match status" value="1"/>
</dbReference>
<dbReference type="InterPro" id="IPR014720">
    <property type="entry name" value="dsRBD_dom"/>
</dbReference>
<dbReference type="InterPro" id="IPR011907">
    <property type="entry name" value="RNase_III"/>
</dbReference>
<dbReference type="InterPro" id="IPR000999">
    <property type="entry name" value="RNase_III_dom"/>
</dbReference>
<dbReference type="InterPro" id="IPR036389">
    <property type="entry name" value="RNase_III_sf"/>
</dbReference>
<dbReference type="NCBIfam" id="TIGR02191">
    <property type="entry name" value="RNaseIII"/>
    <property type="match status" value="1"/>
</dbReference>
<dbReference type="PANTHER" id="PTHR11207:SF0">
    <property type="entry name" value="RIBONUCLEASE 3"/>
    <property type="match status" value="1"/>
</dbReference>
<dbReference type="PANTHER" id="PTHR11207">
    <property type="entry name" value="RIBONUCLEASE III"/>
    <property type="match status" value="1"/>
</dbReference>
<dbReference type="Pfam" id="PF00035">
    <property type="entry name" value="dsrm"/>
    <property type="match status" value="1"/>
</dbReference>
<dbReference type="Pfam" id="PF14622">
    <property type="entry name" value="Ribonucleas_3_3"/>
    <property type="match status" value="1"/>
</dbReference>
<dbReference type="SMART" id="SM00358">
    <property type="entry name" value="DSRM"/>
    <property type="match status" value="1"/>
</dbReference>
<dbReference type="SMART" id="SM00535">
    <property type="entry name" value="RIBOc"/>
    <property type="match status" value="1"/>
</dbReference>
<dbReference type="SUPFAM" id="SSF54768">
    <property type="entry name" value="dsRNA-binding domain-like"/>
    <property type="match status" value="1"/>
</dbReference>
<dbReference type="SUPFAM" id="SSF69065">
    <property type="entry name" value="RNase III domain-like"/>
    <property type="match status" value="1"/>
</dbReference>
<dbReference type="PROSITE" id="PS50137">
    <property type="entry name" value="DS_RBD"/>
    <property type="match status" value="1"/>
</dbReference>
<dbReference type="PROSITE" id="PS00517">
    <property type="entry name" value="RNASE_3_1"/>
    <property type="match status" value="1"/>
</dbReference>
<dbReference type="PROSITE" id="PS50142">
    <property type="entry name" value="RNASE_3_2"/>
    <property type="match status" value="1"/>
</dbReference>
<reference key="1">
    <citation type="submission" date="1999-01" db="EMBL/GenBank/DDBJ databases">
        <authorList>
            <person name="Um H.W."/>
            <person name="Kang H.S."/>
        </authorList>
    </citation>
    <scope>NUCLEOTIDE SEQUENCE [GENOMIC DNA]</scope>
    <source>
        <strain>ATCC 31821 / ZM4 / CP4</strain>
    </source>
</reference>
<reference key="2">
    <citation type="journal article" date="2005" name="Nat. Biotechnol.">
        <title>The genome sequence of the ethanologenic bacterium Zymomonas mobilis ZM4.</title>
        <authorList>
            <person name="Seo J.-S."/>
            <person name="Chong H."/>
            <person name="Park H.S."/>
            <person name="Yoon K.-O."/>
            <person name="Jung C."/>
            <person name="Kim J.J."/>
            <person name="Hong J.H."/>
            <person name="Kim H."/>
            <person name="Kim J.-H."/>
            <person name="Kil J.-I."/>
            <person name="Park C.J."/>
            <person name="Oh H.-M."/>
            <person name="Lee J.-S."/>
            <person name="Jin S.-J."/>
            <person name="Um H.-W."/>
            <person name="Lee H.-J."/>
            <person name="Oh S.-J."/>
            <person name="Kim J.Y."/>
            <person name="Kang H.L."/>
            <person name="Lee S.Y."/>
            <person name="Lee K.J."/>
            <person name="Kang H.S."/>
        </authorList>
    </citation>
    <scope>NUCLEOTIDE SEQUENCE [LARGE SCALE GENOMIC DNA]</scope>
    <source>
        <strain>ATCC 31821 / ZM4 / CP4</strain>
    </source>
</reference>